<keyword id="KW-0067">ATP-binding</keyword>
<keyword id="KW-0963">Cytoplasm</keyword>
<keyword id="KW-0418">Kinase</keyword>
<keyword id="KW-0547">Nucleotide-binding</keyword>
<keyword id="KW-0808">Transferase</keyword>
<organism>
    <name type="scientific">Aeromonas salmonicida (strain A449)</name>
    <dbReference type="NCBI Taxonomy" id="382245"/>
    <lineage>
        <taxon>Bacteria</taxon>
        <taxon>Pseudomonadati</taxon>
        <taxon>Pseudomonadota</taxon>
        <taxon>Gammaproteobacteria</taxon>
        <taxon>Aeromonadales</taxon>
        <taxon>Aeromonadaceae</taxon>
        <taxon>Aeromonas</taxon>
    </lineage>
</organism>
<reference key="1">
    <citation type="journal article" date="2008" name="BMC Genomics">
        <title>The genome of Aeromonas salmonicida subsp. salmonicida A449: insights into the evolution of a fish pathogen.</title>
        <authorList>
            <person name="Reith M.E."/>
            <person name="Singh R.K."/>
            <person name="Curtis B."/>
            <person name="Boyd J.M."/>
            <person name="Bouevitch A."/>
            <person name="Kimball J."/>
            <person name="Munholland J."/>
            <person name="Murphy C."/>
            <person name="Sarty D."/>
            <person name="Williams J."/>
            <person name="Nash J.H."/>
            <person name="Johnson S.C."/>
            <person name="Brown L.L."/>
        </authorList>
    </citation>
    <scope>NUCLEOTIDE SEQUENCE [LARGE SCALE GENOMIC DNA]</scope>
    <source>
        <strain>A449</strain>
    </source>
</reference>
<accession>A4SLS4</accession>
<evidence type="ECO:0000255" key="1">
    <source>
        <dbReference type="HAMAP-Rule" id="MF_00238"/>
    </source>
</evidence>
<gene>
    <name evidence="1" type="primary">cmk</name>
    <name type="ordered locus">ASA_1767</name>
</gene>
<sequence>MPQMAPVMTIDGPSGAGKGTLCQLLAEKLGWHLLDSGAIYRVLALAALHHDVELDSEAALVPLAANLDVQFQVDSEQVKVVLEGEDVSRTIRTEEVGNAASKIAAFPRVREALLRRQRAFRQTPGLIADGRDMGTVVFPDAEVKIFLDASAEERAQRRYKQLQDKGFDVNFERLLTEIRERDDRDRNRAVAPLKAAEDALVVDSTSMTIDEVLATVLAYAEQQLGDASAS</sequence>
<name>KCY_AERS4</name>
<proteinExistence type="inferred from homology"/>
<feature type="chain" id="PRO_1000048180" description="Cytidylate kinase">
    <location>
        <begin position="1"/>
        <end position="230"/>
    </location>
</feature>
<feature type="binding site" evidence="1">
    <location>
        <begin position="12"/>
        <end position="20"/>
    </location>
    <ligand>
        <name>ATP</name>
        <dbReference type="ChEBI" id="CHEBI:30616"/>
    </ligand>
</feature>
<comment type="catalytic activity">
    <reaction evidence="1">
        <text>CMP + ATP = CDP + ADP</text>
        <dbReference type="Rhea" id="RHEA:11600"/>
        <dbReference type="ChEBI" id="CHEBI:30616"/>
        <dbReference type="ChEBI" id="CHEBI:58069"/>
        <dbReference type="ChEBI" id="CHEBI:60377"/>
        <dbReference type="ChEBI" id="CHEBI:456216"/>
        <dbReference type="EC" id="2.7.4.25"/>
    </reaction>
</comment>
<comment type="catalytic activity">
    <reaction evidence="1">
        <text>dCMP + ATP = dCDP + ADP</text>
        <dbReference type="Rhea" id="RHEA:25094"/>
        <dbReference type="ChEBI" id="CHEBI:30616"/>
        <dbReference type="ChEBI" id="CHEBI:57566"/>
        <dbReference type="ChEBI" id="CHEBI:58593"/>
        <dbReference type="ChEBI" id="CHEBI:456216"/>
        <dbReference type="EC" id="2.7.4.25"/>
    </reaction>
</comment>
<comment type="subcellular location">
    <subcellularLocation>
        <location evidence="1">Cytoplasm</location>
    </subcellularLocation>
</comment>
<comment type="similarity">
    <text evidence="1">Belongs to the cytidylate kinase family. Type 1 subfamily.</text>
</comment>
<dbReference type="EC" id="2.7.4.25" evidence="1"/>
<dbReference type="EMBL" id="CP000644">
    <property type="protein sequence ID" value="ABO89846.1"/>
    <property type="molecule type" value="Genomic_DNA"/>
</dbReference>
<dbReference type="RefSeq" id="WP_005315040.1">
    <property type="nucleotide sequence ID" value="NC_009348.1"/>
</dbReference>
<dbReference type="SMR" id="A4SLS4"/>
<dbReference type="STRING" id="29491.GCA_000820065_02995"/>
<dbReference type="KEGG" id="asa:ASA_1767"/>
<dbReference type="eggNOG" id="COG0283">
    <property type="taxonomic scope" value="Bacteria"/>
</dbReference>
<dbReference type="HOGENOM" id="CLU_079959_2_0_6"/>
<dbReference type="Proteomes" id="UP000000225">
    <property type="component" value="Chromosome"/>
</dbReference>
<dbReference type="GO" id="GO:0005829">
    <property type="term" value="C:cytosol"/>
    <property type="evidence" value="ECO:0007669"/>
    <property type="project" value="TreeGrafter"/>
</dbReference>
<dbReference type="GO" id="GO:0005524">
    <property type="term" value="F:ATP binding"/>
    <property type="evidence" value="ECO:0007669"/>
    <property type="project" value="UniProtKB-UniRule"/>
</dbReference>
<dbReference type="GO" id="GO:0036430">
    <property type="term" value="F:CMP kinase activity"/>
    <property type="evidence" value="ECO:0007669"/>
    <property type="project" value="RHEA"/>
</dbReference>
<dbReference type="GO" id="GO:0036431">
    <property type="term" value="F:dCMP kinase activity"/>
    <property type="evidence" value="ECO:0007669"/>
    <property type="project" value="RHEA"/>
</dbReference>
<dbReference type="GO" id="GO:0015949">
    <property type="term" value="P:nucleobase-containing small molecule interconversion"/>
    <property type="evidence" value="ECO:0007669"/>
    <property type="project" value="TreeGrafter"/>
</dbReference>
<dbReference type="GO" id="GO:0006220">
    <property type="term" value="P:pyrimidine nucleotide metabolic process"/>
    <property type="evidence" value="ECO:0007669"/>
    <property type="project" value="UniProtKB-UniRule"/>
</dbReference>
<dbReference type="CDD" id="cd02020">
    <property type="entry name" value="CMPK"/>
    <property type="match status" value="1"/>
</dbReference>
<dbReference type="FunFam" id="3.40.50.300:FF:000262">
    <property type="entry name" value="Cytidylate kinase"/>
    <property type="match status" value="1"/>
</dbReference>
<dbReference type="Gene3D" id="3.40.50.300">
    <property type="entry name" value="P-loop containing nucleotide triphosphate hydrolases"/>
    <property type="match status" value="1"/>
</dbReference>
<dbReference type="HAMAP" id="MF_00238">
    <property type="entry name" value="Cytidyl_kinase_type1"/>
    <property type="match status" value="1"/>
</dbReference>
<dbReference type="InterPro" id="IPR003136">
    <property type="entry name" value="Cytidylate_kin"/>
</dbReference>
<dbReference type="InterPro" id="IPR011994">
    <property type="entry name" value="Cytidylate_kinase_dom"/>
</dbReference>
<dbReference type="InterPro" id="IPR027417">
    <property type="entry name" value="P-loop_NTPase"/>
</dbReference>
<dbReference type="NCBIfam" id="TIGR00017">
    <property type="entry name" value="cmk"/>
    <property type="match status" value="1"/>
</dbReference>
<dbReference type="PANTHER" id="PTHR21299:SF2">
    <property type="entry name" value="CYTIDYLATE KINASE"/>
    <property type="match status" value="1"/>
</dbReference>
<dbReference type="PANTHER" id="PTHR21299">
    <property type="entry name" value="CYTIDYLATE KINASE/PANTOATE-BETA-ALANINE LIGASE"/>
    <property type="match status" value="1"/>
</dbReference>
<dbReference type="Pfam" id="PF02224">
    <property type="entry name" value="Cytidylate_kin"/>
    <property type="match status" value="1"/>
</dbReference>
<dbReference type="SUPFAM" id="SSF52540">
    <property type="entry name" value="P-loop containing nucleoside triphosphate hydrolases"/>
    <property type="match status" value="1"/>
</dbReference>
<protein>
    <recommendedName>
        <fullName evidence="1">Cytidylate kinase</fullName>
        <shortName evidence="1">CK</shortName>
        <ecNumber evidence="1">2.7.4.25</ecNumber>
    </recommendedName>
    <alternativeName>
        <fullName evidence="1">Cytidine monophosphate kinase</fullName>
        <shortName evidence="1">CMP kinase</shortName>
    </alternativeName>
</protein>